<geneLocation type="chloroplast"/>
<comment type="subunit">
    <text evidence="1">Part of the 30S ribosomal subunit.</text>
</comment>
<comment type="subcellular location">
    <subcellularLocation>
        <location>Plastid</location>
        <location>Chloroplast</location>
    </subcellularLocation>
</comment>
<comment type="similarity">
    <text evidence="1">Belongs to the universal ribosomal protein uS11 family.</text>
</comment>
<gene>
    <name evidence="1" type="primary">rps11</name>
</gene>
<dbReference type="EMBL" id="DQ424856">
    <property type="protein sequence ID" value="ABE47566.1"/>
    <property type="molecule type" value="Genomic_DNA"/>
</dbReference>
<dbReference type="RefSeq" id="YP_002608405.1">
    <property type="nucleotide sequence ID" value="NC_012119.1"/>
</dbReference>
<dbReference type="RefSeq" id="YP_567110.1">
    <property type="nucleotide sequence ID" value="NC_007957.1"/>
</dbReference>
<dbReference type="SMR" id="Q0ZIY6"/>
<dbReference type="FunCoup" id="Q0ZIY6">
    <property type="interactions" value="1220"/>
</dbReference>
<dbReference type="STRING" id="29760.Q0ZIY6"/>
<dbReference type="GeneID" id="4025132"/>
<dbReference type="GeneID" id="7498608"/>
<dbReference type="KEGG" id="vvi:4025132"/>
<dbReference type="KEGG" id="vvi:7498608"/>
<dbReference type="InParanoid" id="Q0ZIY6"/>
<dbReference type="OrthoDB" id="924556at71240"/>
<dbReference type="Proteomes" id="UP000009183">
    <property type="component" value="Chloroplast"/>
</dbReference>
<dbReference type="GO" id="GO:0009507">
    <property type="term" value="C:chloroplast"/>
    <property type="evidence" value="ECO:0007669"/>
    <property type="project" value="UniProtKB-SubCell"/>
</dbReference>
<dbReference type="GO" id="GO:1990904">
    <property type="term" value="C:ribonucleoprotein complex"/>
    <property type="evidence" value="ECO:0007669"/>
    <property type="project" value="UniProtKB-KW"/>
</dbReference>
<dbReference type="GO" id="GO:0005840">
    <property type="term" value="C:ribosome"/>
    <property type="evidence" value="ECO:0007669"/>
    <property type="project" value="UniProtKB-KW"/>
</dbReference>
<dbReference type="GO" id="GO:0019843">
    <property type="term" value="F:rRNA binding"/>
    <property type="evidence" value="ECO:0007669"/>
    <property type="project" value="UniProtKB-UniRule"/>
</dbReference>
<dbReference type="GO" id="GO:0003735">
    <property type="term" value="F:structural constituent of ribosome"/>
    <property type="evidence" value="ECO:0000318"/>
    <property type="project" value="GO_Central"/>
</dbReference>
<dbReference type="GO" id="GO:0006412">
    <property type="term" value="P:translation"/>
    <property type="evidence" value="ECO:0000318"/>
    <property type="project" value="GO_Central"/>
</dbReference>
<dbReference type="FunFam" id="3.30.420.80:FF:000003">
    <property type="entry name" value="30S ribosomal protein S11, chloroplastic"/>
    <property type="match status" value="1"/>
</dbReference>
<dbReference type="Gene3D" id="3.30.420.80">
    <property type="entry name" value="Ribosomal protein S11"/>
    <property type="match status" value="1"/>
</dbReference>
<dbReference type="HAMAP" id="MF_01310">
    <property type="entry name" value="Ribosomal_uS11"/>
    <property type="match status" value="1"/>
</dbReference>
<dbReference type="InterPro" id="IPR001971">
    <property type="entry name" value="Ribosomal_uS11"/>
</dbReference>
<dbReference type="InterPro" id="IPR019981">
    <property type="entry name" value="Ribosomal_uS11_bac-type"/>
</dbReference>
<dbReference type="InterPro" id="IPR018102">
    <property type="entry name" value="Ribosomal_uS11_CS"/>
</dbReference>
<dbReference type="InterPro" id="IPR036967">
    <property type="entry name" value="Ribosomal_uS11_sf"/>
</dbReference>
<dbReference type="NCBIfam" id="NF003698">
    <property type="entry name" value="PRK05309.1"/>
    <property type="match status" value="1"/>
</dbReference>
<dbReference type="NCBIfam" id="TIGR03632">
    <property type="entry name" value="uS11_bact"/>
    <property type="match status" value="1"/>
</dbReference>
<dbReference type="PANTHER" id="PTHR11759">
    <property type="entry name" value="40S RIBOSOMAL PROTEIN S14/30S RIBOSOMAL PROTEIN S11"/>
    <property type="match status" value="1"/>
</dbReference>
<dbReference type="Pfam" id="PF00411">
    <property type="entry name" value="Ribosomal_S11"/>
    <property type="match status" value="1"/>
</dbReference>
<dbReference type="PIRSF" id="PIRSF002131">
    <property type="entry name" value="Ribosomal_S11"/>
    <property type="match status" value="1"/>
</dbReference>
<dbReference type="SUPFAM" id="SSF53137">
    <property type="entry name" value="Translational machinery components"/>
    <property type="match status" value="1"/>
</dbReference>
<dbReference type="PROSITE" id="PS00054">
    <property type="entry name" value="RIBOSOMAL_S11"/>
    <property type="match status" value="1"/>
</dbReference>
<accession>Q0ZIY6</accession>
<name>RR11_VITVI</name>
<protein>
    <recommendedName>
        <fullName evidence="1">Small ribosomal subunit protein uS11c</fullName>
    </recommendedName>
    <alternativeName>
        <fullName evidence="3">30S ribosomal protein S11, chloroplastic</fullName>
    </alternativeName>
</protein>
<evidence type="ECO:0000255" key="1">
    <source>
        <dbReference type="HAMAP-Rule" id="MF_01310"/>
    </source>
</evidence>
<evidence type="ECO:0000256" key="2">
    <source>
        <dbReference type="SAM" id="MobiDB-lite"/>
    </source>
</evidence>
<evidence type="ECO:0000305" key="3"/>
<sequence>MAKPIPRIGSRRNGRIGSRKSARRIPKGVIHVQASFNNTIVTVTDVRGRVVSWSSAGTCGFRGTRRGTPFAAQTAAGNAIRTVVDQGMQRAEVMIKGPGLGRDAALRAIRRSGILLSFVRDVTPMPHNGCRPPKKRRV</sequence>
<reference key="1">
    <citation type="journal article" date="2006" name="BMC Evol. Biol.">
        <title>Phylogenetic analyses of Vitis (Vitaceae) based on complete chloroplast genome sequences: effects of taxon sampling and phylogenetic methods on resolving relationships among rosids.</title>
        <authorList>
            <person name="Jansen R.K."/>
            <person name="Kaittanis C."/>
            <person name="Lee S.-B."/>
            <person name="Saski C."/>
            <person name="Tomkins J."/>
            <person name="Alverson A.J."/>
            <person name="Daniell H."/>
        </authorList>
    </citation>
    <scope>NUCLEOTIDE SEQUENCE [LARGE SCALE GENOMIC DNA]</scope>
    <source>
        <strain>cv. Maxxa</strain>
    </source>
</reference>
<proteinExistence type="inferred from homology"/>
<keyword id="KW-0150">Chloroplast</keyword>
<keyword id="KW-0934">Plastid</keyword>
<keyword id="KW-1185">Reference proteome</keyword>
<keyword id="KW-0687">Ribonucleoprotein</keyword>
<keyword id="KW-0689">Ribosomal protein</keyword>
<keyword id="KW-0694">RNA-binding</keyword>
<keyword id="KW-0699">rRNA-binding</keyword>
<feature type="chain" id="PRO_0000276659" description="Small ribosomal subunit protein uS11c">
    <location>
        <begin position="1"/>
        <end position="138"/>
    </location>
</feature>
<feature type="region of interest" description="Disordered" evidence="2">
    <location>
        <begin position="1"/>
        <end position="23"/>
    </location>
</feature>
<feature type="compositionally biased region" description="Basic residues" evidence="2">
    <location>
        <begin position="9"/>
        <end position="23"/>
    </location>
</feature>
<organism>
    <name type="scientific">Vitis vinifera</name>
    <name type="common">Grape</name>
    <dbReference type="NCBI Taxonomy" id="29760"/>
    <lineage>
        <taxon>Eukaryota</taxon>
        <taxon>Viridiplantae</taxon>
        <taxon>Streptophyta</taxon>
        <taxon>Embryophyta</taxon>
        <taxon>Tracheophyta</taxon>
        <taxon>Spermatophyta</taxon>
        <taxon>Magnoliopsida</taxon>
        <taxon>eudicotyledons</taxon>
        <taxon>Gunneridae</taxon>
        <taxon>Pentapetalae</taxon>
        <taxon>rosids</taxon>
        <taxon>Vitales</taxon>
        <taxon>Vitaceae</taxon>
        <taxon>Viteae</taxon>
        <taxon>Vitis</taxon>
    </lineage>
</organism>